<reference key="1">
    <citation type="submission" date="2007-10" db="EMBL/GenBank/DDBJ databases">
        <title>Complete sequence of chromosome 1 of Burkholderia multivorans ATCC 17616.</title>
        <authorList>
            <person name="Copeland A."/>
            <person name="Lucas S."/>
            <person name="Lapidus A."/>
            <person name="Barry K."/>
            <person name="Glavina del Rio T."/>
            <person name="Dalin E."/>
            <person name="Tice H."/>
            <person name="Pitluck S."/>
            <person name="Chain P."/>
            <person name="Malfatti S."/>
            <person name="Shin M."/>
            <person name="Vergez L."/>
            <person name="Schmutz J."/>
            <person name="Larimer F."/>
            <person name="Land M."/>
            <person name="Hauser L."/>
            <person name="Kyrpides N."/>
            <person name="Kim E."/>
            <person name="Tiedje J."/>
            <person name="Richardson P."/>
        </authorList>
    </citation>
    <scope>NUCLEOTIDE SEQUENCE [LARGE SCALE GENOMIC DNA]</scope>
    <source>
        <strain>ATCC 17616 / 249</strain>
    </source>
</reference>
<reference key="2">
    <citation type="submission" date="2007-04" db="EMBL/GenBank/DDBJ databases">
        <title>Complete genome sequence of Burkholderia multivorans ATCC 17616.</title>
        <authorList>
            <person name="Ohtsubo Y."/>
            <person name="Yamashita A."/>
            <person name="Kurokawa K."/>
            <person name="Takami H."/>
            <person name="Yuhara S."/>
            <person name="Nishiyama E."/>
            <person name="Endo R."/>
            <person name="Miyazaki R."/>
            <person name="Ono A."/>
            <person name="Yano K."/>
            <person name="Ito M."/>
            <person name="Sota M."/>
            <person name="Yuji N."/>
            <person name="Hattori M."/>
            <person name="Tsuda M."/>
        </authorList>
    </citation>
    <scope>NUCLEOTIDE SEQUENCE [LARGE SCALE GENOMIC DNA]</scope>
    <source>
        <strain>ATCC 17616 / 249</strain>
    </source>
</reference>
<sequence length="84" mass="9411">MSILSFLLGEKKKSASVAKERLQLIIAHERVGGRPPADYLPALQKELVAVISKYVQISNDDIRVSLERQDDLEVLEVKIEIPQA</sequence>
<proteinExistence type="inferred from homology"/>
<feature type="chain" id="PRO_1000114207" description="Cell division topological specificity factor">
    <location>
        <begin position="1"/>
        <end position="84"/>
    </location>
</feature>
<organism>
    <name type="scientific">Burkholderia multivorans (strain ATCC 17616 / 249)</name>
    <dbReference type="NCBI Taxonomy" id="395019"/>
    <lineage>
        <taxon>Bacteria</taxon>
        <taxon>Pseudomonadati</taxon>
        <taxon>Pseudomonadota</taxon>
        <taxon>Betaproteobacteria</taxon>
        <taxon>Burkholderiales</taxon>
        <taxon>Burkholderiaceae</taxon>
        <taxon>Burkholderia</taxon>
        <taxon>Burkholderia cepacia complex</taxon>
    </lineage>
</organism>
<keyword id="KW-0131">Cell cycle</keyword>
<keyword id="KW-0132">Cell division</keyword>
<keyword id="KW-1185">Reference proteome</keyword>
<accession>A9AER8</accession>
<protein>
    <recommendedName>
        <fullName evidence="1">Cell division topological specificity factor</fullName>
    </recommendedName>
</protein>
<evidence type="ECO:0000255" key="1">
    <source>
        <dbReference type="HAMAP-Rule" id="MF_00262"/>
    </source>
</evidence>
<name>MINE_BURM1</name>
<gene>
    <name evidence="1" type="primary">minE</name>
    <name type="ordered locus">Bmul_2414</name>
    <name type="ordered locus">BMULJ_00820</name>
</gene>
<comment type="function">
    <text evidence="1">Prevents the cell division inhibition by proteins MinC and MinD at internal division sites while permitting inhibition at polar sites. This ensures cell division at the proper site by restricting the formation of a division septum at the midpoint of the long axis of the cell.</text>
</comment>
<comment type="similarity">
    <text evidence="1">Belongs to the MinE family.</text>
</comment>
<dbReference type="EMBL" id="CP000868">
    <property type="protein sequence ID" value="ABX16099.1"/>
    <property type="molecule type" value="Genomic_DNA"/>
</dbReference>
<dbReference type="EMBL" id="AP009385">
    <property type="protein sequence ID" value="BAG42779.1"/>
    <property type="molecule type" value="Genomic_DNA"/>
</dbReference>
<dbReference type="RefSeq" id="WP_006400798.1">
    <property type="nucleotide sequence ID" value="NC_010804.1"/>
</dbReference>
<dbReference type="SMR" id="A9AER8"/>
<dbReference type="STRING" id="395019.BMULJ_00820"/>
<dbReference type="GeneID" id="89569254"/>
<dbReference type="KEGG" id="bmj:BMULJ_00820"/>
<dbReference type="KEGG" id="bmu:Bmul_2414"/>
<dbReference type="eggNOG" id="COG0851">
    <property type="taxonomic scope" value="Bacteria"/>
</dbReference>
<dbReference type="HOGENOM" id="CLU_137929_2_1_4"/>
<dbReference type="Proteomes" id="UP000008815">
    <property type="component" value="Chromosome 1"/>
</dbReference>
<dbReference type="GO" id="GO:0051301">
    <property type="term" value="P:cell division"/>
    <property type="evidence" value="ECO:0007669"/>
    <property type="project" value="UniProtKB-KW"/>
</dbReference>
<dbReference type="GO" id="GO:0032955">
    <property type="term" value="P:regulation of division septum assembly"/>
    <property type="evidence" value="ECO:0007669"/>
    <property type="project" value="InterPro"/>
</dbReference>
<dbReference type="FunFam" id="3.30.1070.10:FF:000001">
    <property type="entry name" value="Cell division topological specificity factor"/>
    <property type="match status" value="1"/>
</dbReference>
<dbReference type="Gene3D" id="3.30.1070.10">
    <property type="entry name" value="Cell division topological specificity factor MinE"/>
    <property type="match status" value="1"/>
</dbReference>
<dbReference type="HAMAP" id="MF_00262">
    <property type="entry name" value="MinE"/>
    <property type="match status" value="1"/>
</dbReference>
<dbReference type="InterPro" id="IPR005527">
    <property type="entry name" value="MinE"/>
</dbReference>
<dbReference type="InterPro" id="IPR036707">
    <property type="entry name" value="MinE_sf"/>
</dbReference>
<dbReference type="NCBIfam" id="TIGR01215">
    <property type="entry name" value="minE"/>
    <property type="match status" value="1"/>
</dbReference>
<dbReference type="NCBIfam" id="NF001422">
    <property type="entry name" value="PRK00296.1"/>
    <property type="match status" value="1"/>
</dbReference>
<dbReference type="NCBIfam" id="NF010595">
    <property type="entry name" value="PRK13989.1"/>
    <property type="match status" value="1"/>
</dbReference>
<dbReference type="Pfam" id="PF03776">
    <property type="entry name" value="MinE"/>
    <property type="match status" value="1"/>
</dbReference>
<dbReference type="SUPFAM" id="SSF55229">
    <property type="entry name" value="Cell division protein MinE topological specificity domain"/>
    <property type="match status" value="1"/>
</dbReference>